<name>PCKG_MYCMM</name>
<organism>
    <name type="scientific">Mycobacterium marinum (strain ATCC BAA-535 / M)</name>
    <dbReference type="NCBI Taxonomy" id="216594"/>
    <lineage>
        <taxon>Bacteria</taxon>
        <taxon>Bacillati</taxon>
        <taxon>Actinomycetota</taxon>
        <taxon>Actinomycetes</taxon>
        <taxon>Mycobacteriales</taxon>
        <taxon>Mycobacteriaceae</taxon>
        <taxon>Mycobacterium</taxon>
        <taxon>Mycobacterium ulcerans group</taxon>
    </lineage>
</organism>
<accession>B2HMX9</accession>
<comment type="function">
    <text evidence="1">Catalyzes the conversion of oxaloacetate (OAA) to phosphoenolpyruvate (PEP), the rate-limiting step in the metabolic pathway that produces glucose from lactate and other precursors derived from the citric acid cycle.</text>
</comment>
<comment type="catalytic activity">
    <reaction evidence="1">
        <text>oxaloacetate + GTP = phosphoenolpyruvate + GDP + CO2</text>
        <dbReference type="Rhea" id="RHEA:10388"/>
        <dbReference type="ChEBI" id="CHEBI:16452"/>
        <dbReference type="ChEBI" id="CHEBI:16526"/>
        <dbReference type="ChEBI" id="CHEBI:37565"/>
        <dbReference type="ChEBI" id="CHEBI:58189"/>
        <dbReference type="ChEBI" id="CHEBI:58702"/>
        <dbReference type="EC" id="4.1.1.32"/>
    </reaction>
</comment>
<comment type="cofactor">
    <cofactor evidence="1">
        <name>Mn(2+)</name>
        <dbReference type="ChEBI" id="CHEBI:29035"/>
    </cofactor>
    <text evidence="1">Binds 1 Mn(2+) ion per subunit.</text>
</comment>
<comment type="pathway">
    <text evidence="1">Carbohydrate biosynthesis; gluconeogenesis.</text>
</comment>
<comment type="subunit">
    <text evidence="1">Monomer.</text>
</comment>
<comment type="subcellular location">
    <subcellularLocation>
        <location evidence="1">Cytoplasm</location>
    </subcellularLocation>
</comment>
<comment type="similarity">
    <text evidence="1">Belongs to the phosphoenolpyruvate carboxykinase [GTP] family.</text>
</comment>
<protein>
    <recommendedName>
        <fullName evidence="1">Phosphoenolpyruvate carboxykinase [GTP]</fullName>
        <shortName evidence="1">PEP carboxykinase</shortName>
        <shortName evidence="1">PEPCK</shortName>
        <ecNumber evidence="1">4.1.1.32</ecNumber>
    </recommendedName>
</protein>
<reference key="1">
    <citation type="journal article" date="2008" name="Genome Res.">
        <title>Insights from the complete genome sequence of Mycobacterium marinum on the evolution of Mycobacterium tuberculosis.</title>
        <authorList>
            <person name="Stinear T.P."/>
            <person name="Seemann T."/>
            <person name="Harrison P.F."/>
            <person name="Jenkin G.A."/>
            <person name="Davies J.K."/>
            <person name="Johnson P.D."/>
            <person name="Abdellah Z."/>
            <person name="Arrowsmith C."/>
            <person name="Chillingworth T."/>
            <person name="Churcher C."/>
            <person name="Clarke K."/>
            <person name="Cronin A."/>
            <person name="Davis P."/>
            <person name="Goodhead I."/>
            <person name="Holroyd N."/>
            <person name="Jagels K."/>
            <person name="Lord A."/>
            <person name="Moule S."/>
            <person name="Mungall K."/>
            <person name="Norbertczak H."/>
            <person name="Quail M.A."/>
            <person name="Rabbinowitsch E."/>
            <person name="Walker D."/>
            <person name="White B."/>
            <person name="Whitehead S."/>
            <person name="Small P.L."/>
            <person name="Brosch R."/>
            <person name="Ramakrishnan L."/>
            <person name="Fischbach M.A."/>
            <person name="Parkhill J."/>
            <person name="Cole S.T."/>
        </authorList>
    </citation>
    <scope>NUCLEOTIDE SEQUENCE [LARGE SCALE GENOMIC DNA]</scope>
    <source>
        <strain>ATCC BAA-535 / M</strain>
    </source>
</reference>
<proteinExistence type="inferred from homology"/>
<sequence>MTSATIPGLDTAPTNHQGLLSWVQEVAELTQPDRVVFADGSDEEFHRLSAQLVDAGTFTRLNDEKFPNSYLALSDPSDVARVESRTFICSEREIDAGPTNNWMDPSEMRTLMTDLYRGCMRGRTMYVVPFCMGPLGAEDPKLGVEITDSEYVVVSMKVMTRMGTAALEKMGQDGFFVKALHSVGAPLEDGQADVPWPCSDTKYITHFPETREIWSYGSGYGGNALLGKKCYSLRIASAMARDEGWLAEHMLILKLISPENKAYYIAAAFPSACGKTNLAMLQPTIPGWRAETLGDDIAWMRFGKDGRLYAVNPEFGFFGVAPGTNWKSNPNAMRTIAAGNTVFTNVALTDDGEVWWEGLEGDPQHLVDWKGNEWYFRETETTAAHPNSRYCTPMSQCPILAPEWDDPQGVPISAILFGGRRKTTVPLVTQARDWQHGVFIGATLGSEQTAAAEGKVGNVRRDPMAMLPFMGYNVGDYVQHWIDIGKNSDESKLPQVFFVNWFRRGEDHRFLWPGFGENSRVMKWIVDRIEHKAGGKTTPIGTVPTVEDLDLEGLDANPADVSEALAVNAQEWREELPLIEEWLQFIGEKLPTGIKDEFDALKERLRDAE</sequence>
<dbReference type="EC" id="4.1.1.32" evidence="1"/>
<dbReference type="EMBL" id="CP000854">
    <property type="protein sequence ID" value="ACC38918.1"/>
    <property type="molecule type" value="Genomic_DNA"/>
</dbReference>
<dbReference type="RefSeq" id="WP_012392426.1">
    <property type="nucleotide sequence ID" value="NC_010612.1"/>
</dbReference>
<dbReference type="SMR" id="B2HMX9"/>
<dbReference type="STRING" id="216594.MMAR_0451"/>
<dbReference type="KEGG" id="mmi:MMAR_0451"/>
<dbReference type="eggNOG" id="COG1274">
    <property type="taxonomic scope" value="Bacteria"/>
</dbReference>
<dbReference type="HOGENOM" id="CLU_028872_1_1_11"/>
<dbReference type="OrthoDB" id="9758871at2"/>
<dbReference type="UniPathway" id="UPA00138"/>
<dbReference type="Proteomes" id="UP000001190">
    <property type="component" value="Chromosome"/>
</dbReference>
<dbReference type="GO" id="GO:0005829">
    <property type="term" value="C:cytosol"/>
    <property type="evidence" value="ECO:0007669"/>
    <property type="project" value="TreeGrafter"/>
</dbReference>
<dbReference type="GO" id="GO:0005525">
    <property type="term" value="F:GTP binding"/>
    <property type="evidence" value="ECO:0007669"/>
    <property type="project" value="UniProtKB-UniRule"/>
</dbReference>
<dbReference type="GO" id="GO:0030145">
    <property type="term" value="F:manganese ion binding"/>
    <property type="evidence" value="ECO:0007669"/>
    <property type="project" value="UniProtKB-UniRule"/>
</dbReference>
<dbReference type="GO" id="GO:0004613">
    <property type="term" value="F:phosphoenolpyruvate carboxykinase (GTP) activity"/>
    <property type="evidence" value="ECO:0007669"/>
    <property type="project" value="UniProtKB-UniRule"/>
</dbReference>
<dbReference type="GO" id="GO:0071333">
    <property type="term" value="P:cellular response to glucose stimulus"/>
    <property type="evidence" value="ECO:0007669"/>
    <property type="project" value="TreeGrafter"/>
</dbReference>
<dbReference type="GO" id="GO:0006094">
    <property type="term" value="P:gluconeogenesis"/>
    <property type="evidence" value="ECO:0007669"/>
    <property type="project" value="UniProtKB-UniRule"/>
</dbReference>
<dbReference type="GO" id="GO:0046327">
    <property type="term" value="P:glycerol biosynthetic process from pyruvate"/>
    <property type="evidence" value="ECO:0007669"/>
    <property type="project" value="TreeGrafter"/>
</dbReference>
<dbReference type="GO" id="GO:0006107">
    <property type="term" value="P:oxaloacetate metabolic process"/>
    <property type="evidence" value="ECO:0007669"/>
    <property type="project" value="TreeGrafter"/>
</dbReference>
<dbReference type="GO" id="GO:0019543">
    <property type="term" value="P:propionate catabolic process"/>
    <property type="evidence" value="ECO:0007669"/>
    <property type="project" value="TreeGrafter"/>
</dbReference>
<dbReference type="GO" id="GO:0033993">
    <property type="term" value="P:response to lipid"/>
    <property type="evidence" value="ECO:0007669"/>
    <property type="project" value="TreeGrafter"/>
</dbReference>
<dbReference type="GO" id="GO:0042594">
    <property type="term" value="P:response to starvation"/>
    <property type="evidence" value="ECO:0007669"/>
    <property type="project" value="TreeGrafter"/>
</dbReference>
<dbReference type="CDD" id="cd00819">
    <property type="entry name" value="PEPCK_GTP"/>
    <property type="match status" value="1"/>
</dbReference>
<dbReference type="FunFam" id="3.40.449.10:FF:000005">
    <property type="entry name" value="Phosphoenolpyruvate carboxykinase [GTP]"/>
    <property type="match status" value="1"/>
</dbReference>
<dbReference type="Gene3D" id="3.90.228.20">
    <property type="match status" value="1"/>
</dbReference>
<dbReference type="Gene3D" id="3.40.449.10">
    <property type="entry name" value="Phosphoenolpyruvate Carboxykinase, domain 1"/>
    <property type="match status" value="1"/>
</dbReference>
<dbReference type="Gene3D" id="2.170.8.10">
    <property type="entry name" value="Phosphoenolpyruvate Carboxykinase, domain 2"/>
    <property type="match status" value="1"/>
</dbReference>
<dbReference type="HAMAP" id="MF_00452">
    <property type="entry name" value="PEPCK_GTP"/>
    <property type="match status" value="1"/>
</dbReference>
<dbReference type="InterPro" id="IPR018091">
    <property type="entry name" value="PEP_carboxykin_GTP_CS"/>
</dbReference>
<dbReference type="InterPro" id="IPR013035">
    <property type="entry name" value="PEP_carboxykinase_C"/>
</dbReference>
<dbReference type="InterPro" id="IPR008209">
    <property type="entry name" value="PEP_carboxykinase_GTP"/>
</dbReference>
<dbReference type="InterPro" id="IPR035077">
    <property type="entry name" value="PEP_carboxykinase_GTP_C"/>
</dbReference>
<dbReference type="InterPro" id="IPR035078">
    <property type="entry name" value="PEP_carboxykinase_GTP_N"/>
</dbReference>
<dbReference type="InterPro" id="IPR008210">
    <property type="entry name" value="PEP_carboxykinase_N"/>
</dbReference>
<dbReference type="NCBIfam" id="NF003253">
    <property type="entry name" value="PRK04210.1"/>
    <property type="match status" value="1"/>
</dbReference>
<dbReference type="PANTHER" id="PTHR11561">
    <property type="entry name" value="PHOSPHOENOLPYRUVATE CARBOXYKINASE"/>
    <property type="match status" value="1"/>
</dbReference>
<dbReference type="PANTHER" id="PTHR11561:SF0">
    <property type="entry name" value="PHOSPHOENOLPYRUVATE CARBOXYKINASE [GTP]-RELATED"/>
    <property type="match status" value="1"/>
</dbReference>
<dbReference type="Pfam" id="PF00821">
    <property type="entry name" value="PEPCK_GTP"/>
    <property type="match status" value="1"/>
</dbReference>
<dbReference type="Pfam" id="PF17297">
    <property type="entry name" value="PEPCK_N"/>
    <property type="match status" value="1"/>
</dbReference>
<dbReference type="PIRSF" id="PIRSF001348">
    <property type="entry name" value="PEP_carboxykinase_GTP"/>
    <property type="match status" value="1"/>
</dbReference>
<dbReference type="SUPFAM" id="SSF68923">
    <property type="entry name" value="PEP carboxykinase N-terminal domain"/>
    <property type="match status" value="1"/>
</dbReference>
<dbReference type="SUPFAM" id="SSF53795">
    <property type="entry name" value="PEP carboxykinase-like"/>
    <property type="match status" value="1"/>
</dbReference>
<dbReference type="PROSITE" id="PS00505">
    <property type="entry name" value="PEPCK_GTP"/>
    <property type="match status" value="1"/>
</dbReference>
<evidence type="ECO:0000255" key="1">
    <source>
        <dbReference type="HAMAP-Rule" id="MF_00452"/>
    </source>
</evidence>
<keyword id="KW-0963">Cytoplasm</keyword>
<keyword id="KW-0210">Decarboxylase</keyword>
<keyword id="KW-0312">Gluconeogenesis</keyword>
<keyword id="KW-0342">GTP-binding</keyword>
<keyword id="KW-0456">Lyase</keyword>
<keyword id="KW-0464">Manganese</keyword>
<keyword id="KW-0479">Metal-binding</keyword>
<keyword id="KW-0547">Nucleotide-binding</keyword>
<keyword id="KW-1185">Reference proteome</keyword>
<gene>
    <name evidence="1" type="primary">pckG</name>
    <name type="ordered locus">MMAR_0451</name>
</gene>
<feature type="chain" id="PRO_1000125046" description="Phosphoenolpyruvate carboxykinase [GTP]">
    <location>
        <begin position="1"/>
        <end position="609"/>
    </location>
</feature>
<feature type="active site" evidence="1">
    <location>
        <position position="273"/>
    </location>
</feature>
<feature type="binding site" evidence="1">
    <location>
        <position position="81"/>
    </location>
    <ligand>
        <name>substrate</name>
    </ligand>
</feature>
<feature type="binding site" evidence="1">
    <location>
        <begin position="220"/>
        <end position="222"/>
    </location>
    <ligand>
        <name>substrate</name>
    </ligand>
</feature>
<feature type="binding site" evidence="1">
    <location>
        <position position="229"/>
    </location>
    <ligand>
        <name>Mn(2+)</name>
        <dbReference type="ChEBI" id="CHEBI:29035"/>
    </ligand>
</feature>
<feature type="binding site" evidence="1">
    <location>
        <position position="249"/>
    </location>
    <ligand>
        <name>Mn(2+)</name>
        <dbReference type="ChEBI" id="CHEBI:29035"/>
    </ligand>
</feature>
<feature type="binding site" evidence="1">
    <location>
        <position position="271"/>
    </location>
    <ligand>
        <name>substrate</name>
    </ligand>
</feature>
<feature type="binding site" evidence="1">
    <location>
        <begin position="272"/>
        <end position="277"/>
    </location>
    <ligand>
        <name>GTP</name>
        <dbReference type="ChEBI" id="CHEBI:37565"/>
    </ligand>
</feature>
<feature type="binding site" evidence="1">
    <location>
        <position position="296"/>
    </location>
    <ligand>
        <name>Mn(2+)</name>
        <dbReference type="ChEBI" id="CHEBI:29035"/>
    </ligand>
</feature>
<feature type="binding site" evidence="1">
    <location>
        <begin position="387"/>
        <end position="389"/>
    </location>
    <ligand>
        <name>substrate</name>
    </ligand>
</feature>
<feature type="binding site" evidence="1">
    <location>
        <position position="389"/>
    </location>
    <ligand>
        <name>GTP</name>
        <dbReference type="ChEBI" id="CHEBI:37565"/>
    </ligand>
</feature>
<feature type="binding site" evidence="1">
    <location>
        <position position="420"/>
    </location>
    <ligand>
        <name>GTP</name>
        <dbReference type="ChEBI" id="CHEBI:37565"/>
    </ligand>
</feature>
<feature type="binding site" evidence="1">
    <location>
        <begin position="515"/>
        <end position="518"/>
    </location>
    <ligand>
        <name>GTP</name>
        <dbReference type="ChEBI" id="CHEBI:37565"/>
    </ligand>
</feature>